<name>ASPG1_DROGR</name>
<gene>
    <name type="ORF">GH22932</name>
</gene>
<keyword id="KW-0068">Autocatalytic cleavage</keyword>
<keyword id="KW-1015">Disulfide bond</keyword>
<keyword id="KW-0378">Hydrolase</keyword>
<keyword id="KW-0645">Protease</keyword>
<keyword id="KW-1185">Reference proteome</keyword>
<keyword id="KW-0732">Signal</keyword>
<feature type="signal peptide" evidence="3">
    <location>
        <begin position="1"/>
        <end status="unknown"/>
    </location>
</feature>
<feature type="chain" id="PRO_0000384127" description="Glycosylasparaginase alpha chain" evidence="2">
    <location>
        <begin status="unknown"/>
        <end position="245"/>
    </location>
</feature>
<feature type="chain" id="PRO_0000384128" description="Glycosylasparaginase beta chain" evidence="2">
    <location>
        <begin position="246"/>
        <end position="393"/>
    </location>
</feature>
<feature type="region of interest" description="Disordered" evidence="4">
    <location>
        <begin position="15"/>
        <end position="41"/>
    </location>
</feature>
<feature type="compositionally biased region" description="Polar residues" evidence="4">
    <location>
        <begin position="19"/>
        <end position="41"/>
    </location>
</feature>
<feature type="active site" description="Nucleophile" evidence="2">
    <location>
        <position position="246"/>
    </location>
</feature>
<feature type="binding site" evidence="1">
    <location>
        <begin position="274"/>
        <end position="277"/>
    </location>
    <ligand>
        <name>substrate</name>
    </ligand>
</feature>
<feature type="binding site" evidence="1">
    <location>
        <begin position="297"/>
        <end position="300"/>
    </location>
    <ligand>
        <name>substrate</name>
    </ligand>
</feature>
<feature type="disulfide bond" evidence="2">
    <location>
        <begin position="100"/>
        <end position="105"/>
    </location>
</feature>
<feature type="disulfide bond" evidence="2">
    <location>
        <begin position="199"/>
        <end position="215"/>
    </location>
</feature>
<feature type="disulfide bond" evidence="2">
    <location>
        <begin position="357"/>
        <end position="381"/>
    </location>
</feature>
<protein>
    <recommendedName>
        <fullName evidence="2">Putative N(4)-(beta-N-acetylglucosaminyl)-L-asparaginase GH22932</fullName>
        <ecNumber>3.5.1.26</ecNumber>
    </recommendedName>
    <alternativeName>
        <fullName evidence="2">Aspartylglucosaminidase</fullName>
        <shortName evidence="2">AGA</shortName>
    </alternativeName>
    <alternativeName>
        <fullName evidence="2">Glycosylasparaginase</fullName>
    </alternativeName>
    <alternativeName>
        <fullName evidence="2">N4-(N-acetyl-beta-glucosaminyl)-L-asparagine amidase</fullName>
    </alternativeName>
    <component>
        <recommendedName>
            <fullName evidence="2">Glycosylasparaginase alpha chain</fullName>
        </recommendedName>
    </component>
    <component>
        <recommendedName>
            <fullName evidence="2">Glycosylasparaginase beta chain</fullName>
        </recommendedName>
    </component>
</protein>
<reference evidence="5" key="1">
    <citation type="journal article" date="2007" name="Nature">
        <title>Evolution of genes and genomes on the Drosophila phylogeny.</title>
        <authorList>
            <consortium name="Drosophila 12 genomes consortium"/>
        </authorList>
    </citation>
    <scope>NUCLEOTIDE SEQUENCE [LARGE SCALE GENOMIC DNA]</scope>
    <source>
        <strain evidence="5">Tucson 15287-2541.00</strain>
    </source>
</reference>
<proteinExistence type="inferred from homology"/>
<accession>B4JVW6</accession>
<organism>
    <name type="scientific">Drosophila grimshawi</name>
    <name type="common">Hawaiian fruit fly</name>
    <name type="synonym">Idiomyia grimshawi</name>
    <dbReference type="NCBI Taxonomy" id="7222"/>
    <lineage>
        <taxon>Eukaryota</taxon>
        <taxon>Metazoa</taxon>
        <taxon>Ecdysozoa</taxon>
        <taxon>Arthropoda</taxon>
        <taxon>Hexapoda</taxon>
        <taxon>Insecta</taxon>
        <taxon>Pterygota</taxon>
        <taxon>Neoptera</taxon>
        <taxon>Endopterygota</taxon>
        <taxon>Diptera</taxon>
        <taxon>Brachycera</taxon>
        <taxon>Muscomorpha</taxon>
        <taxon>Ephydroidea</taxon>
        <taxon>Drosophilidae</taxon>
        <taxon>Drosophila</taxon>
        <taxon>Hawaiian Drosophila</taxon>
    </lineage>
</organism>
<sequence>MPMVIHSTSASWGTALKPITNSSSDTITPNPNLITTSRGSSTRPSYITTLTAKKMEQLLPMVINTWNMSEANEMAWRILQQSEGGVRQTRNAVVEGVTRCEELQCFHSVGYGGSPDERGETTLDAMVMDGGLMDVGAVGGLRNIKEAIRVARFVLEHTSHTLLVGQSATDFAVSMGFRTSSLVTPWSHDEWEKWKAKNCQPNCWLNVNPDPKLSCGPYVPKATPLTRWKEDRARNEYEIGENNHDTIGMIAIDVENQIHTGTSTNGMTHKIPGRVGDSPIVGAGSYADNEVGAAVATGDGDVMMRFLPSLLAVEAMRNGKSPQEAAELGIKRIAKYYKDFIGAVIAVNRLGQYAAACYGIPEFPYMISNPTHTVSVQTVKCLPYVHVEPLPKS</sequence>
<evidence type="ECO:0000250" key="1"/>
<evidence type="ECO:0000250" key="2">
    <source>
        <dbReference type="UniProtKB" id="P20933"/>
    </source>
</evidence>
<evidence type="ECO:0000255" key="3"/>
<evidence type="ECO:0000256" key="4">
    <source>
        <dbReference type="SAM" id="MobiDB-lite"/>
    </source>
</evidence>
<evidence type="ECO:0000312" key="5">
    <source>
        <dbReference type="EMBL" id="EDV98104.1"/>
    </source>
</evidence>
<dbReference type="EC" id="3.5.1.26"/>
<dbReference type="EMBL" id="CH916375">
    <property type="protein sequence ID" value="EDV98104.1"/>
    <property type="molecule type" value="Genomic_DNA"/>
</dbReference>
<dbReference type="RefSeq" id="XP_001995032.1">
    <property type="nucleotide sequence ID" value="XM_001994996.1"/>
</dbReference>
<dbReference type="SMR" id="B4JVW6"/>
<dbReference type="FunCoup" id="B4JVW6">
    <property type="interactions" value="239"/>
</dbReference>
<dbReference type="STRING" id="7222.B4JVW6"/>
<dbReference type="EnsemblMetazoa" id="FBtr0471536">
    <property type="protein sequence ID" value="FBpp0421571"/>
    <property type="gene ID" value="FBgn0130389"/>
</dbReference>
<dbReference type="EnsemblMetazoa" id="XM_001994996.3">
    <property type="protein sequence ID" value="XP_001995032.2"/>
    <property type="gene ID" value="LOC6568928"/>
</dbReference>
<dbReference type="GeneID" id="6568928"/>
<dbReference type="KEGG" id="dgr:6568928"/>
<dbReference type="eggNOG" id="KOG1593">
    <property type="taxonomic scope" value="Eukaryota"/>
</dbReference>
<dbReference type="HOGENOM" id="CLU_021603_0_0_1"/>
<dbReference type="InParanoid" id="B4JVW6"/>
<dbReference type="OMA" id="YKPIINI"/>
<dbReference type="OrthoDB" id="188713at2759"/>
<dbReference type="PhylomeDB" id="B4JVW6"/>
<dbReference type="Proteomes" id="UP000001070">
    <property type="component" value="Unassembled WGS sequence"/>
</dbReference>
<dbReference type="GO" id="GO:0005764">
    <property type="term" value="C:lysosome"/>
    <property type="evidence" value="ECO:0000250"/>
    <property type="project" value="UniProtKB"/>
</dbReference>
<dbReference type="GO" id="GO:0003948">
    <property type="term" value="F:N4-(beta-N-acetylglucosaminyl)-L-asparaginase activity"/>
    <property type="evidence" value="ECO:0000250"/>
    <property type="project" value="UniProtKB"/>
</dbReference>
<dbReference type="GO" id="GO:0008233">
    <property type="term" value="F:peptidase activity"/>
    <property type="evidence" value="ECO:0007669"/>
    <property type="project" value="UniProtKB-KW"/>
</dbReference>
<dbReference type="GO" id="GO:0006517">
    <property type="term" value="P:protein deglycosylation"/>
    <property type="evidence" value="ECO:0000250"/>
    <property type="project" value="UniProtKB"/>
</dbReference>
<dbReference type="GO" id="GO:0006508">
    <property type="term" value="P:proteolysis"/>
    <property type="evidence" value="ECO:0007669"/>
    <property type="project" value="UniProtKB-KW"/>
</dbReference>
<dbReference type="CDD" id="cd04513">
    <property type="entry name" value="Glycosylasparaginase"/>
    <property type="match status" value="1"/>
</dbReference>
<dbReference type="FunFam" id="3.60.20.30:FF:000003">
    <property type="entry name" value="N(4)-(Beta-N-acetylglucosaminyl)-L-asparaginase isoform X1"/>
    <property type="match status" value="1"/>
</dbReference>
<dbReference type="Gene3D" id="3.60.20.30">
    <property type="entry name" value="(Glycosyl)asparaginase"/>
    <property type="match status" value="1"/>
</dbReference>
<dbReference type="InterPro" id="IPR029055">
    <property type="entry name" value="Ntn_hydrolases_N"/>
</dbReference>
<dbReference type="InterPro" id="IPR000246">
    <property type="entry name" value="Peptidase_T2"/>
</dbReference>
<dbReference type="PANTHER" id="PTHR10188">
    <property type="entry name" value="L-ASPARAGINASE"/>
    <property type="match status" value="1"/>
</dbReference>
<dbReference type="PANTHER" id="PTHR10188:SF6">
    <property type="entry name" value="N(4)-(BETA-N-ACETYLGLUCOSAMINYL)-L-ASPARAGINASE"/>
    <property type="match status" value="1"/>
</dbReference>
<dbReference type="Pfam" id="PF01112">
    <property type="entry name" value="Asparaginase_2"/>
    <property type="match status" value="1"/>
</dbReference>
<dbReference type="SUPFAM" id="SSF56235">
    <property type="entry name" value="N-terminal nucleophile aminohydrolases (Ntn hydrolases)"/>
    <property type="match status" value="1"/>
</dbReference>
<comment type="function">
    <text evidence="2">Cleaves the GlcNAc-Asn bond which joins oligosaccharides to the peptide of asparagine-linked glycoproteins.</text>
</comment>
<comment type="catalytic activity">
    <reaction evidence="2">
        <text>N(4)-(beta-N-acetyl-D-glucosaminyl)-L-asparagine + H2O = N-acetyl-beta-D-glucosaminylamine + L-aspartate + H(+)</text>
        <dbReference type="Rhea" id="RHEA:11544"/>
        <dbReference type="ChEBI" id="CHEBI:15377"/>
        <dbReference type="ChEBI" id="CHEBI:15378"/>
        <dbReference type="ChEBI" id="CHEBI:15947"/>
        <dbReference type="ChEBI" id="CHEBI:29991"/>
        <dbReference type="ChEBI" id="CHEBI:58080"/>
        <dbReference type="EC" id="3.5.1.26"/>
    </reaction>
</comment>
<comment type="subunit">
    <text evidence="2">Heterotetramer of two alpha and two beta chains arranged as a dimer of alpha/beta heterodimers.</text>
</comment>
<comment type="PTM">
    <text evidence="1">Cleaved into an alpha and beta chain by autocatalysis; this activates the enzyme. The N-terminal residue of the beta subunit is responsible for the nucleophile hydrolase activity (By similarity).</text>
</comment>
<comment type="similarity">
    <text evidence="3">Belongs to the Ntn-hydrolase family.</text>
</comment>